<gene>
    <name evidence="6" type="primary">ARASP</name>
    <name evidence="8" type="ordered locus">At2g32480</name>
    <name evidence="9" type="ORF">T26B15.4</name>
</gene>
<sequence length="447" mass="48726">MLLNISSSPISHRNPHFLSNFNNPISYFPRRSKTHLSKSHFFPKFTPLSNQSLKNRVLFGNKRYPDGERFDFRSRAISGIDLGSFESVLEAIAVLTTIIVVHESGHFLAASLQGIHVSKFAIGFGPILAKFDYNNVEYSLRAFPLGGFVGFPDNDPDSEIPIDDENLLKNRPTLDRSIVVSAGIIANVIFAYAIIFVQVLSVGLPVQEAFPGVLVPEVKTFSAASRDGLLSGDVILAVDGTELSKTGPDAVSKIVDIVKRNPKSNVVFRIERGGEDFDIRVTPDKNFDGTGKIGVQLSPNVRITKVRPRNIPETFRFVGREFMGLSSNVLDGLKQTFFNFSQTASKVAGPVAIIAVGAEVARSNIDGLYQFAALLNINLAVINLLPLPALDGGTLALILLEAVRGGKKLPVEVEQGIMSSGIMLVIFLGLFLIVKDTLSLDFIKEML</sequence>
<feature type="transit peptide" description="Chloroplast" evidence="2">
    <location>
        <begin position="1"/>
        <end position="73"/>
    </location>
</feature>
<feature type="chain" id="PRO_0000432414" description="Membrane metalloprotease ARASP, chloroplastic">
    <location>
        <begin position="74"/>
        <end position="447"/>
    </location>
</feature>
<feature type="transmembrane region" description="Helical; Name=1" evidence="2">
    <location>
        <begin position="177"/>
        <end position="197"/>
    </location>
</feature>
<feature type="transmembrane region" description="Helical; Name=2" evidence="2">
    <location>
        <begin position="379"/>
        <end position="399"/>
    </location>
</feature>
<feature type="transmembrane region" description="Helical; Name=3" evidence="2">
    <location>
        <begin position="413"/>
        <end position="433"/>
    </location>
</feature>
<feature type="domain" description="PDZ" evidence="3">
    <location>
        <begin position="202"/>
        <end position="244"/>
    </location>
</feature>
<feature type="active site" evidence="4">
    <location>
        <position position="103"/>
    </location>
</feature>
<feature type="binding site" evidence="4">
    <location>
        <position position="102"/>
    </location>
    <ligand>
        <name>Zn(2+)</name>
        <dbReference type="ChEBI" id="CHEBI:29105"/>
        <note>catalytic</note>
    </ligand>
</feature>
<feature type="binding site" evidence="4">
    <location>
        <position position="106"/>
    </location>
    <ligand>
        <name>Zn(2+)</name>
        <dbReference type="ChEBI" id="CHEBI:29105"/>
        <note>catalytic</note>
    </ligand>
</feature>
<dbReference type="EC" id="3.4.24.-"/>
<dbReference type="EMBL" id="AC004681">
    <property type="protein sequence ID" value="AAC25930.1"/>
    <property type="molecule type" value="Genomic_DNA"/>
</dbReference>
<dbReference type="EMBL" id="CP002685">
    <property type="protein sequence ID" value="AEC08691.1"/>
    <property type="molecule type" value="Genomic_DNA"/>
</dbReference>
<dbReference type="EMBL" id="AF386983">
    <property type="protein sequence ID" value="AAK62428.1"/>
    <property type="molecule type" value="mRNA"/>
</dbReference>
<dbReference type="EMBL" id="BT006594">
    <property type="protein sequence ID" value="AAP31938.1"/>
    <property type="molecule type" value="mRNA"/>
</dbReference>
<dbReference type="EMBL" id="AY085846">
    <property type="protein sequence ID" value="AAM63060.1"/>
    <property type="molecule type" value="mRNA"/>
</dbReference>
<dbReference type="PIR" id="T02547">
    <property type="entry name" value="T02547"/>
</dbReference>
<dbReference type="RefSeq" id="NP_565745.1">
    <molecule id="O80885-1"/>
    <property type="nucleotide sequence ID" value="NM_128807.1"/>
</dbReference>
<dbReference type="SMR" id="O80885"/>
<dbReference type="FunCoup" id="O80885">
    <property type="interactions" value="672"/>
</dbReference>
<dbReference type="STRING" id="3702.O80885"/>
<dbReference type="MEROPS" id="M50.A10"/>
<dbReference type="iPTMnet" id="O80885"/>
<dbReference type="PaxDb" id="3702-AT2G32480.1"/>
<dbReference type="ProteomicsDB" id="240604">
    <molecule id="O80885-1"/>
</dbReference>
<dbReference type="EnsemblPlants" id="AT2G32480.1">
    <molecule id="O80885-1"/>
    <property type="protein sequence ID" value="AT2G32480.1"/>
    <property type="gene ID" value="AT2G32480"/>
</dbReference>
<dbReference type="GeneID" id="817809"/>
<dbReference type="Gramene" id="AT2G32480.1">
    <molecule id="O80885-1"/>
    <property type="protein sequence ID" value="AT2G32480.1"/>
    <property type="gene ID" value="AT2G32480"/>
</dbReference>
<dbReference type="KEGG" id="ath:AT2G32480"/>
<dbReference type="Araport" id="AT2G32480"/>
<dbReference type="TAIR" id="AT2G32480">
    <property type="gene designation" value="ARASP"/>
</dbReference>
<dbReference type="eggNOG" id="ENOG502QT40">
    <property type="taxonomic scope" value="Eukaryota"/>
</dbReference>
<dbReference type="InParanoid" id="O80885"/>
<dbReference type="OMA" id="FWIATST"/>
<dbReference type="PhylomeDB" id="O80885"/>
<dbReference type="PRO" id="PR:O80885"/>
<dbReference type="Proteomes" id="UP000006548">
    <property type="component" value="Chromosome 2"/>
</dbReference>
<dbReference type="ExpressionAtlas" id="O80885">
    <property type="expression patterns" value="baseline and differential"/>
</dbReference>
<dbReference type="GO" id="GO:0009507">
    <property type="term" value="C:chloroplast"/>
    <property type="evidence" value="ECO:0007005"/>
    <property type="project" value="TAIR"/>
</dbReference>
<dbReference type="GO" id="GO:0009706">
    <property type="term" value="C:chloroplast inner membrane"/>
    <property type="evidence" value="ECO:0000314"/>
    <property type="project" value="TAIR"/>
</dbReference>
<dbReference type="GO" id="GO:0046872">
    <property type="term" value="F:metal ion binding"/>
    <property type="evidence" value="ECO:0007669"/>
    <property type="project" value="UniProtKB-KW"/>
</dbReference>
<dbReference type="GO" id="GO:0004222">
    <property type="term" value="F:metalloendopeptidase activity"/>
    <property type="evidence" value="ECO:0000304"/>
    <property type="project" value="TAIR"/>
</dbReference>
<dbReference type="GO" id="GO:0009658">
    <property type="term" value="P:chloroplast organization"/>
    <property type="evidence" value="ECO:0000315"/>
    <property type="project" value="TAIR"/>
</dbReference>
<dbReference type="GO" id="GO:0006508">
    <property type="term" value="P:proteolysis"/>
    <property type="evidence" value="ECO:0007669"/>
    <property type="project" value="UniProtKB-KW"/>
</dbReference>
<dbReference type="CDD" id="cd06163">
    <property type="entry name" value="S2P-M50_PDZ_RseP-like"/>
    <property type="match status" value="1"/>
</dbReference>
<dbReference type="FunFam" id="2.30.42.10:FF:000302">
    <property type="entry name" value="Membrane metalloprotease ARASP, chloroplastic"/>
    <property type="match status" value="1"/>
</dbReference>
<dbReference type="Gene3D" id="2.30.42.10">
    <property type="match status" value="1"/>
</dbReference>
<dbReference type="InterPro" id="IPR001478">
    <property type="entry name" value="PDZ"/>
</dbReference>
<dbReference type="InterPro" id="IPR036034">
    <property type="entry name" value="PDZ_sf"/>
</dbReference>
<dbReference type="InterPro" id="IPR004387">
    <property type="entry name" value="Pept_M50_Zn"/>
</dbReference>
<dbReference type="InterPro" id="IPR008915">
    <property type="entry name" value="Peptidase_M50"/>
</dbReference>
<dbReference type="PANTHER" id="PTHR42837:SF5">
    <property type="entry name" value="MEMBRANE METALLOPROTEASE ARASP, CHLOROPLASTIC"/>
    <property type="match status" value="1"/>
</dbReference>
<dbReference type="PANTHER" id="PTHR42837">
    <property type="entry name" value="REGULATOR OF SIGMA-E PROTEASE RSEP"/>
    <property type="match status" value="1"/>
</dbReference>
<dbReference type="Pfam" id="PF13180">
    <property type="entry name" value="PDZ_2"/>
    <property type="match status" value="1"/>
</dbReference>
<dbReference type="Pfam" id="PF02163">
    <property type="entry name" value="Peptidase_M50"/>
    <property type="match status" value="1"/>
</dbReference>
<dbReference type="SMART" id="SM00228">
    <property type="entry name" value="PDZ"/>
    <property type="match status" value="1"/>
</dbReference>
<dbReference type="SUPFAM" id="SSF50156">
    <property type="entry name" value="PDZ domain-like"/>
    <property type="match status" value="1"/>
</dbReference>
<dbReference type="PROSITE" id="PS50106">
    <property type="entry name" value="PDZ"/>
    <property type="match status" value="1"/>
</dbReference>
<proteinExistence type="evidence at transcript level"/>
<reference key="1">
    <citation type="journal article" date="1999" name="Nature">
        <title>Sequence and analysis of chromosome 2 of the plant Arabidopsis thaliana.</title>
        <authorList>
            <person name="Lin X."/>
            <person name="Kaul S."/>
            <person name="Rounsley S.D."/>
            <person name="Shea T.P."/>
            <person name="Benito M.-I."/>
            <person name="Town C.D."/>
            <person name="Fujii C.Y."/>
            <person name="Mason T.M."/>
            <person name="Bowman C.L."/>
            <person name="Barnstead M.E."/>
            <person name="Feldblyum T.V."/>
            <person name="Buell C.R."/>
            <person name="Ketchum K.A."/>
            <person name="Lee J.J."/>
            <person name="Ronning C.M."/>
            <person name="Koo H.L."/>
            <person name="Moffat K.S."/>
            <person name="Cronin L.A."/>
            <person name="Shen M."/>
            <person name="Pai G."/>
            <person name="Van Aken S."/>
            <person name="Umayam L."/>
            <person name="Tallon L.J."/>
            <person name="Gill J.E."/>
            <person name="Adams M.D."/>
            <person name="Carrera A.J."/>
            <person name="Creasy T.H."/>
            <person name="Goodman H.M."/>
            <person name="Somerville C.R."/>
            <person name="Copenhaver G.P."/>
            <person name="Preuss D."/>
            <person name="Nierman W.C."/>
            <person name="White O."/>
            <person name="Eisen J.A."/>
            <person name="Salzberg S.L."/>
            <person name="Fraser C.M."/>
            <person name="Venter J.C."/>
        </authorList>
    </citation>
    <scope>NUCLEOTIDE SEQUENCE [LARGE SCALE GENOMIC DNA]</scope>
    <source>
        <strain>cv. Columbia</strain>
    </source>
</reference>
<reference key="2">
    <citation type="journal article" date="2017" name="Plant J.">
        <title>Araport11: a complete reannotation of the Arabidopsis thaliana reference genome.</title>
        <authorList>
            <person name="Cheng C.Y."/>
            <person name="Krishnakumar V."/>
            <person name="Chan A.P."/>
            <person name="Thibaud-Nissen F."/>
            <person name="Schobel S."/>
            <person name="Town C.D."/>
        </authorList>
    </citation>
    <scope>GENOME REANNOTATION</scope>
    <source>
        <strain>cv. Columbia</strain>
    </source>
</reference>
<reference key="3">
    <citation type="journal article" date="2003" name="Science">
        <title>Empirical analysis of transcriptional activity in the Arabidopsis genome.</title>
        <authorList>
            <person name="Yamada K."/>
            <person name="Lim J."/>
            <person name="Dale J.M."/>
            <person name="Chen H."/>
            <person name="Shinn P."/>
            <person name="Palm C.J."/>
            <person name="Southwick A.M."/>
            <person name="Wu H.C."/>
            <person name="Kim C.J."/>
            <person name="Nguyen M."/>
            <person name="Pham P.K."/>
            <person name="Cheuk R.F."/>
            <person name="Karlin-Newmann G."/>
            <person name="Liu S.X."/>
            <person name="Lam B."/>
            <person name="Sakano H."/>
            <person name="Wu T."/>
            <person name="Yu G."/>
            <person name="Miranda M."/>
            <person name="Quach H.L."/>
            <person name="Tripp M."/>
            <person name="Chang C.H."/>
            <person name="Lee J.M."/>
            <person name="Toriumi M.J."/>
            <person name="Chan M.M."/>
            <person name="Tang C.C."/>
            <person name="Onodera C.S."/>
            <person name="Deng J.M."/>
            <person name="Akiyama K."/>
            <person name="Ansari Y."/>
            <person name="Arakawa T."/>
            <person name="Banh J."/>
            <person name="Banno F."/>
            <person name="Bowser L."/>
            <person name="Brooks S.Y."/>
            <person name="Carninci P."/>
            <person name="Chao Q."/>
            <person name="Choy N."/>
            <person name="Enju A."/>
            <person name="Goldsmith A.D."/>
            <person name="Gurjal M."/>
            <person name="Hansen N.F."/>
            <person name="Hayashizaki Y."/>
            <person name="Johnson-Hopson C."/>
            <person name="Hsuan V.W."/>
            <person name="Iida K."/>
            <person name="Karnes M."/>
            <person name="Khan S."/>
            <person name="Koesema E."/>
            <person name="Ishida J."/>
            <person name="Jiang P.X."/>
            <person name="Jones T."/>
            <person name="Kawai J."/>
            <person name="Kamiya A."/>
            <person name="Meyers C."/>
            <person name="Nakajima M."/>
            <person name="Narusaka M."/>
            <person name="Seki M."/>
            <person name="Sakurai T."/>
            <person name="Satou M."/>
            <person name="Tamse R."/>
            <person name="Vaysberg M."/>
            <person name="Wallender E.K."/>
            <person name="Wong C."/>
            <person name="Yamamura Y."/>
            <person name="Yuan S."/>
            <person name="Shinozaki K."/>
            <person name="Davis R.W."/>
            <person name="Theologis A."/>
            <person name="Ecker J.R."/>
        </authorList>
    </citation>
    <scope>NUCLEOTIDE SEQUENCE [LARGE SCALE MRNA]</scope>
    <source>
        <strain>cv. Columbia</strain>
    </source>
</reference>
<reference key="4">
    <citation type="submission" date="2002-03" db="EMBL/GenBank/DDBJ databases">
        <title>Full-length cDNA from Arabidopsis thaliana.</title>
        <authorList>
            <person name="Brover V.V."/>
            <person name="Troukhan M.E."/>
            <person name="Alexandrov N.A."/>
            <person name="Lu Y.-P."/>
            <person name="Flavell R.B."/>
            <person name="Feldmann K.A."/>
        </authorList>
    </citation>
    <scope>NUCLEOTIDE SEQUENCE [LARGE SCALE MRNA]</scope>
</reference>
<reference key="5">
    <citation type="journal article" date="2002" name="Curr. Genet.">
        <title>The gene complement for proteolysis in the cyanobacterium Synechocystis sp. PCC 6803 and Arabidopsis thaliana chloroplasts.</title>
        <authorList>
            <person name="Sokolenko A."/>
            <person name="Pojidaeva E."/>
            <person name="Zinchenko V."/>
            <person name="Panichkin V."/>
            <person name="Glaser V.M."/>
            <person name="Herrmann R.G."/>
            <person name="Shestakov S.V."/>
        </authorList>
    </citation>
    <scope>IDENTIFICATION</scope>
</reference>
<reference key="6">
    <citation type="journal article" date="2005" name="Plant J.">
        <title>EGY1 encodes a membrane-associated and ATP-independent metalloprotease that is required for chloroplast development.</title>
        <authorList>
            <person name="Chen G."/>
            <person name="Bi Y.R."/>
            <person name="Li N."/>
        </authorList>
    </citation>
    <scope>GENE FAMILY</scope>
</reference>
<reference key="7">
    <citation type="journal article" date="2006" name="FEBS Lett.">
        <title>A chloroplastic inner envelope membrane protease is essential for plant development.</title>
        <authorList>
            <person name="Bolter B."/>
            <person name="Nada A."/>
            <person name="Fulgosi H."/>
            <person name="Soll J."/>
        </authorList>
    </citation>
    <scope>FUNCTION</scope>
    <scope>TISSUE SPECIFICITY</scope>
    <scope>SUBCELLULAR LOCATION</scope>
    <scope>DISRUPTION PHENOTYPE</scope>
</reference>
<name>ARASP_ARATH</name>
<comment type="function">
    <text evidence="5">Metalloprotease essential for chloroplast and plant development. May be involved in regulated intramembrane proteolysis (RIP).</text>
</comment>
<comment type="cofactor">
    <cofactor evidence="1">
        <name>Zn(2+)</name>
        <dbReference type="ChEBI" id="CHEBI:29105"/>
    </cofactor>
</comment>
<comment type="subcellular location">
    <subcellularLocation>
        <location evidence="5">Plastid</location>
        <location evidence="5">Chloroplast inner membrane</location>
        <topology evidence="2">Multi-pass membrane protein</topology>
    </subcellularLocation>
</comment>
<comment type="alternative products">
    <event type="alternative splicing"/>
    <isoform>
        <id>O80885-1</id>
        <name>1</name>
        <sequence type="displayed"/>
    </isoform>
    <text>A number of isoforms are produced.</text>
</comment>
<comment type="tissue specificity">
    <text evidence="5">Expressed in green seedlings and cotyledons. Low levels of expression in roots, siliques and seeds.</text>
</comment>
<comment type="disruption phenotype">
    <text evidence="5">Lethal when homozygous.</text>
</comment>
<comment type="similarity">
    <text evidence="7">Belongs to the peptidase M50A family.</text>
</comment>
<evidence type="ECO:0000250" key="1">
    <source>
        <dbReference type="UniProtKB" id="Q57837"/>
    </source>
</evidence>
<evidence type="ECO:0000255" key="2"/>
<evidence type="ECO:0000255" key="3">
    <source>
        <dbReference type="PROSITE-ProRule" id="PRU00143"/>
    </source>
</evidence>
<evidence type="ECO:0000255" key="4">
    <source>
        <dbReference type="PROSITE-ProRule" id="PRU10095"/>
    </source>
</evidence>
<evidence type="ECO:0000269" key="5">
    <source>
    </source>
</evidence>
<evidence type="ECO:0000303" key="6">
    <source>
    </source>
</evidence>
<evidence type="ECO:0000305" key="7"/>
<evidence type="ECO:0000312" key="8">
    <source>
        <dbReference type="Araport" id="AT2G32480"/>
    </source>
</evidence>
<evidence type="ECO:0000312" key="9">
    <source>
        <dbReference type="EMBL" id="AAC25930.1"/>
    </source>
</evidence>
<evidence type="ECO:0000312" key="10">
    <source>
        <dbReference type="Proteomes" id="UP000006548"/>
    </source>
</evidence>
<keyword id="KW-0025">Alternative splicing</keyword>
<keyword id="KW-0150">Chloroplast</keyword>
<keyword id="KW-0378">Hydrolase</keyword>
<keyword id="KW-0472">Membrane</keyword>
<keyword id="KW-0479">Metal-binding</keyword>
<keyword id="KW-0482">Metalloprotease</keyword>
<keyword id="KW-0934">Plastid</keyword>
<keyword id="KW-1001">Plastid inner membrane</keyword>
<keyword id="KW-0645">Protease</keyword>
<keyword id="KW-1185">Reference proteome</keyword>
<keyword id="KW-0809">Transit peptide</keyword>
<keyword id="KW-0812">Transmembrane</keyword>
<keyword id="KW-1133">Transmembrane helix</keyword>
<keyword id="KW-0862">Zinc</keyword>
<protein>
    <recommendedName>
        <fullName evidence="6">Membrane metalloprotease ARASP, chloroplastic</fullName>
        <ecNumber>3.4.24.-</ecNumber>
    </recommendedName>
</protein>
<accession>O80885</accession>
<organism evidence="10">
    <name type="scientific">Arabidopsis thaliana</name>
    <name type="common">Mouse-ear cress</name>
    <dbReference type="NCBI Taxonomy" id="3702"/>
    <lineage>
        <taxon>Eukaryota</taxon>
        <taxon>Viridiplantae</taxon>
        <taxon>Streptophyta</taxon>
        <taxon>Embryophyta</taxon>
        <taxon>Tracheophyta</taxon>
        <taxon>Spermatophyta</taxon>
        <taxon>Magnoliopsida</taxon>
        <taxon>eudicotyledons</taxon>
        <taxon>Gunneridae</taxon>
        <taxon>Pentapetalae</taxon>
        <taxon>rosids</taxon>
        <taxon>malvids</taxon>
        <taxon>Brassicales</taxon>
        <taxon>Brassicaceae</taxon>
        <taxon>Camelineae</taxon>
        <taxon>Arabidopsis</taxon>
    </lineage>
</organism>